<keyword id="KW-0963">Cytoplasm</keyword>
<keyword id="KW-0227">DNA damage</keyword>
<keyword id="KW-0234">DNA repair</keyword>
<keyword id="KW-0378">Hydrolase</keyword>
<proteinExistence type="inferred from homology"/>
<organism>
    <name type="scientific">Parafrankia sp. (strain EAN1pec)</name>
    <dbReference type="NCBI Taxonomy" id="298653"/>
    <lineage>
        <taxon>Bacteria</taxon>
        <taxon>Bacillati</taxon>
        <taxon>Actinomycetota</taxon>
        <taxon>Actinomycetes</taxon>
        <taxon>Frankiales</taxon>
        <taxon>Frankiaceae</taxon>
        <taxon>Parafrankia</taxon>
    </lineage>
</organism>
<gene>
    <name evidence="1" type="primary">ung</name>
    <name type="ordered locus">Franean1_4601</name>
</gene>
<name>UNG_PARS2</name>
<protein>
    <recommendedName>
        <fullName evidence="1">Uracil-DNA glycosylase</fullName>
        <shortName evidence="1">UDG</shortName>
        <ecNumber evidence="1">3.2.2.27</ecNumber>
    </recommendedName>
</protein>
<evidence type="ECO:0000255" key="1">
    <source>
        <dbReference type="HAMAP-Rule" id="MF_00148"/>
    </source>
</evidence>
<feature type="chain" id="PRO_1000096582" description="Uracil-DNA glycosylase">
    <location>
        <begin position="1"/>
        <end position="225"/>
    </location>
</feature>
<feature type="active site" description="Proton acceptor" evidence="1">
    <location>
        <position position="68"/>
    </location>
</feature>
<reference key="1">
    <citation type="journal article" date="2007" name="Genome Res.">
        <title>Genome characteristics of facultatively symbiotic Frankia sp. strains reflect host range and host plant biogeography.</title>
        <authorList>
            <person name="Normand P."/>
            <person name="Lapierre P."/>
            <person name="Tisa L.S."/>
            <person name="Gogarten J.P."/>
            <person name="Alloisio N."/>
            <person name="Bagnarol E."/>
            <person name="Bassi C.A."/>
            <person name="Berry A.M."/>
            <person name="Bickhart D.M."/>
            <person name="Choisne N."/>
            <person name="Couloux A."/>
            <person name="Cournoyer B."/>
            <person name="Cruveiller S."/>
            <person name="Daubin V."/>
            <person name="Demange N."/>
            <person name="Francino M.P."/>
            <person name="Goltsman E."/>
            <person name="Huang Y."/>
            <person name="Kopp O.R."/>
            <person name="Labarre L."/>
            <person name="Lapidus A."/>
            <person name="Lavire C."/>
            <person name="Marechal J."/>
            <person name="Martinez M."/>
            <person name="Mastronunzio J.E."/>
            <person name="Mullin B.C."/>
            <person name="Niemann J."/>
            <person name="Pujic P."/>
            <person name="Rawnsley T."/>
            <person name="Rouy Z."/>
            <person name="Schenowitz C."/>
            <person name="Sellstedt A."/>
            <person name="Tavares F."/>
            <person name="Tomkins J.P."/>
            <person name="Vallenet D."/>
            <person name="Valverde C."/>
            <person name="Wall L.G."/>
            <person name="Wang Y."/>
            <person name="Medigue C."/>
            <person name="Benson D.R."/>
        </authorList>
    </citation>
    <scope>NUCLEOTIDE SEQUENCE [LARGE SCALE GENOMIC DNA]</scope>
    <source>
        <strain>EAN1pec</strain>
    </source>
</reference>
<sequence>MPAQPLRDILEPGWAKALEPMADRIAAMGDFLRAEIAAGRSYLPAGQHVLRAFQQPFDDVRVLIVGQDPYPTPGMAIGYSFAVAPEVRRLPGSLENIFQELCADLSVPRPTNGDLTPWTRQGVLLLNRVLTTAPRQPGAHRGKGWEEVTEQAIRALAARGTPLVAILWGADARSLRPFLSPAPTIESAHPSPRSADRGFFGSRPFSRANNHLLEQGAQPVDWHLP</sequence>
<comment type="function">
    <text evidence="1">Excises uracil residues from the DNA which can arise as a result of misincorporation of dUMP residues by DNA polymerase or due to deamination of cytosine.</text>
</comment>
<comment type="catalytic activity">
    <reaction evidence="1">
        <text>Hydrolyzes single-stranded DNA or mismatched double-stranded DNA and polynucleotides, releasing free uracil.</text>
        <dbReference type="EC" id="3.2.2.27"/>
    </reaction>
</comment>
<comment type="subcellular location">
    <subcellularLocation>
        <location evidence="1">Cytoplasm</location>
    </subcellularLocation>
</comment>
<comment type="similarity">
    <text evidence="1">Belongs to the uracil-DNA glycosylase (UDG) superfamily. UNG family.</text>
</comment>
<accession>A8LD98</accession>
<dbReference type="EC" id="3.2.2.27" evidence="1"/>
<dbReference type="EMBL" id="CP000820">
    <property type="protein sequence ID" value="ABW13972.1"/>
    <property type="molecule type" value="Genomic_DNA"/>
</dbReference>
<dbReference type="RefSeq" id="WP_020462097.1">
    <property type="nucleotide sequence ID" value="NC_009921.1"/>
</dbReference>
<dbReference type="SMR" id="A8LD98"/>
<dbReference type="STRING" id="298653.Franean1_4601"/>
<dbReference type="KEGG" id="fre:Franean1_4601"/>
<dbReference type="eggNOG" id="COG0692">
    <property type="taxonomic scope" value="Bacteria"/>
</dbReference>
<dbReference type="HOGENOM" id="CLU_032162_3_1_11"/>
<dbReference type="GO" id="GO:0005737">
    <property type="term" value="C:cytoplasm"/>
    <property type="evidence" value="ECO:0007669"/>
    <property type="project" value="UniProtKB-SubCell"/>
</dbReference>
<dbReference type="GO" id="GO:0004844">
    <property type="term" value="F:uracil DNA N-glycosylase activity"/>
    <property type="evidence" value="ECO:0007669"/>
    <property type="project" value="UniProtKB-UniRule"/>
</dbReference>
<dbReference type="GO" id="GO:0097510">
    <property type="term" value="P:base-excision repair, AP site formation via deaminated base removal"/>
    <property type="evidence" value="ECO:0007669"/>
    <property type="project" value="TreeGrafter"/>
</dbReference>
<dbReference type="CDD" id="cd10027">
    <property type="entry name" value="UDG-F1-like"/>
    <property type="match status" value="1"/>
</dbReference>
<dbReference type="FunFam" id="3.40.470.10:FF:000006">
    <property type="entry name" value="Uracil-DNA glycosylase"/>
    <property type="match status" value="1"/>
</dbReference>
<dbReference type="Gene3D" id="3.40.470.10">
    <property type="entry name" value="Uracil-DNA glycosylase-like domain"/>
    <property type="match status" value="1"/>
</dbReference>
<dbReference type="HAMAP" id="MF_00148">
    <property type="entry name" value="UDG"/>
    <property type="match status" value="1"/>
</dbReference>
<dbReference type="InterPro" id="IPR002043">
    <property type="entry name" value="UDG_fam1"/>
</dbReference>
<dbReference type="InterPro" id="IPR018085">
    <property type="entry name" value="Ura-DNA_Glyclase_AS"/>
</dbReference>
<dbReference type="InterPro" id="IPR005122">
    <property type="entry name" value="Uracil-DNA_glycosylase-like"/>
</dbReference>
<dbReference type="InterPro" id="IPR036895">
    <property type="entry name" value="Uracil-DNA_glycosylase-like_sf"/>
</dbReference>
<dbReference type="NCBIfam" id="NF003588">
    <property type="entry name" value="PRK05254.1-1"/>
    <property type="match status" value="1"/>
</dbReference>
<dbReference type="NCBIfam" id="NF003592">
    <property type="entry name" value="PRK05254.1-5"/>
    <property type="match status" value="1"/>
</dbReference>
<dbReference type="PANTHER" id="PTHR11264">
    <property type="entry name" value="URACIL-DNA GLYCOSYLASE"/>
    <property type="match status" value="1"/>
</dbReference>
<dbReference type="PANTHER" id="PTHR11264:SF0">
    <property type="entry name" value="URACIL-DNA GLYCOSYLASE"/>
    <property type="match status" value="1"/>
</dbReference>
<dbReference type="Pfam" id="PF03167">
    <property type="entry name" value="UDG"/>
    <property type="match status" value="1"/>
</dbReference>
<dbReference type="SMART" id="SM00986">
    <property type="entry name" value="UDG"/>
    <property type="match status" value="1"/>
</dbReference>
<dbReference type="SMART" id="SM00987">
    <property type="entry name" value="UreE_C"/>
    <property type="match status" value="1"/>
</dbReference>
<dbReference type="SUPFAM" id="SSF52141">
    <property type="entry name" value="Uracil-DNA glycosylase-like"/>
    <property type="match status" value="1"/>
</dbReference>
<dbReference type="PROSITE" id="PS00130">
    <property type="entry name" value="U_DNA_GLYCOSYLASE"/>
    <property type="match status" value="1"/>
</dbReference>